<sequence>MKPSWLQCRKVTSAGGLGGPLPGSSPARGAGAALRALVVPGPRGGLGGRGCRALSSGSGSEYKTHFAASVTDPERFWGKAAEQISWYKPWTKTLENKHSPSTRWFVEGMLNICYNAVDRHIENGKGDKIAIIYDSPVTNTKATFTYKEVLEQVSKLAGVLVKHGIKKGDTVVIYMPMIPQAMYTMLACARIGAIHSLIFGGFASKELSSRIDHVKPKVVVTASFGIEPGRRVEYVPLVEEALKIGQHKPDKILIYNRPNMEAVPLAPGRDLDWDEEMAKAQSHDCVPVLSEHPLYILYTSGTTGLPKGVIRPTGGYAVMLHWSMSSIYGLQPGEVWWAASDLGWVVGHSYICYGPLLHGNTTVLYEGKPVGTPDAGAYFRVLAEHGVAALFTAPTAIRAIRQQDPGAALGKQYSLTRFKTLFVAGERCDVETLEWSKNVFRVPVLDHWWQTETGSPITASCVGLGNSKTPPPGQAGKSVPGYNVMILDDNMQKLKARCLGNIVVKLPLPPGAFSGLWKNQEAFKHLYFEKFPGYYDTMDAGYMDEEGYLYVMSRVDDVINVAGHRISAGAIEESILSHGTVADCAVVGKEDPLKGHVPLALCVLRKDINATEEQVLEEIVKHVRQNIGPVAAFRNAVFVKQLPKTRSGKIPRSALSAIVNGKPYKITSTIEDPSIFGHVEEMLKQA</sequence>
<organism>
    <name type="scientific">Homo sapiens</name>
    <name type="common">Human</name>
    <dbReference type="NCBI Taxonomy" id="9606"/>
    <lineage>
        <taxon>Eukaryota</taxon>
        <taxon>Metazoa</taxon>
        <taxon>Chordata</taxon>
        <taxon>Craniata</taxon>
        <taxon>Vertebrata</taxon>
        <taxon>Euteleostomi</taxon>
        <taxon>Mammalia</taxon>
        <taxon>Eutheria</taxon>
        <taxon>Euarchontoglires</taxon>
        <taxon>Primates</taxon>
        <taxon>Haplorrhini</taxon>
        <taxon>Catarrhini</taxon>
        <taxon>Hominidae</taxon>
        <taxon>Homo</taxon>
    </lineage>
</organism>
<gene>
    <name type="primary">ACSS3</name>
</gene>
<comment type="function">
    <text evidence="2 5">Catalyzes the synthesis of acetyl-CoA from short-chain fatty acids (PubMed:28003429). Propionate is the preferred substrate (PubMed:28003429). Can utilize acetate and butyrate with a much lower affinity (By similarity).</text>
</comment>
<comment type="catalytic activity">
    <reaction evidence="2">
        <text>acetate + ATP + CoA = acetyl-CoA + AMP + diphosphate</text>
        <dbReference type="Rhea" id="RHEA:23176"/>
        <dbReference type="ChEBI" id="CHEBI:30089"/>
        <dbReference type="ChEBI" id="CHEBI:30616"/>
        <dbReference type="ChEBI" id="CHEBI:33019"/>
        <dbReference type="ChEBI" id="CHEBI:57287"/>
        <dbReference type="ChEBI" id="CHEBI:57288"/>
        <dbReference type="ChEBI" id="CHEBI:456215"/>
        <dbReference type="EC" id="6.2.1.1"/>
    </reaction>
    <physiologicalReaction direction="left-to-right" evidence="2">
        <dbReference type="Rhea" id="RHEA:23177"/>
    </physiologicalReaction>
</comment>
<comment type="catalytic activity">
    <reaction evidence="5">
        <text>propanoate + ATP + CoA = propanoyl-CoA + AMP + diphosphate</text>
        <dbReference type="Rhea" id="RHEA:20373"/>
        <dbReference type="ChEBI" id="CHEBI:17272"/>
        <dbReference type="ChEBI" id="CHEBI:30616"/>
        <dbReference type="ChEBI" id="CHEBI:33019"/>
        <dbReference type="ChEBI" id="CHEBI:57287"/>
        <dbReference type="ChEBI" id="CHEBI:57392"/>
        <dbReference type="ChEBI" id="CHEBI:456215"/>
        <dbReference type="EC" id="6.2.1.17"/>
    </reaction>
    <physiologicalReaction direction="left-to-right" evidence="8">
        <dbReference type="Rhea" id="RHEA:20374"/>
    </physiologicalReaction>
</comment>
<comment type="catalytic activity">
    <reaction evidence="2">
        <text>butanoate + ATP + CoA = butanoyl-CoA + AMP + diphosphate</text>
        <dbReference type="Rhea" id="RHEA:46172"/>
        <dbReference type="ChEBI" id="CHEBI:17968"/>
        <dbReference type="ChEBI" id="CHEBI:30616"/>
        <dbReference type="ChEBI" id="CHEBI:33019"/>
        <dbReference type="ChEBI" id="CHEBI:57287"/>
        <dbReference type="ChEBI" id="CHEBI:57371"/>
        <dbReference type="ChEBI" id="CHEBI:456215"/>
    </reaction>
    <physiologicalReaction direction="left-to-right" evidence="2">
        <dbReference type="Rhea" id="RHEA:46173"/>
    </physiologicalReaction>
</comment>
<comment type="interaction">
    <interactant intactId="EBI-3921478">
        <id>Q9H6R3</id>
    </interactant>
    <interactant intactId="EBI-748974">
        <id>Q96CV9</id>
        <label>OPTN</label>
    </interactant>
    <organismsDiffer>false</organismsDiffer>
    <experiments>3</experiments>
</comment>
<comment type="subcellular location">
    <subcellularLocation>
        <location evidence="5">Mitochondrion matrix</location>
    </subcellularLocation>
</comment>
<comment type="alternative products">
    <event type="alternative splicing"/>
    <isoform>
        <id>Q9H6R3-1</id>
        <name>1</name>
        <sequence type="displayed"/>
    </isoform>
    <isoform>
        <id>Q9H6R3-2</id>
        <name>2</name>
        <sequence type="described" ref="VSP_031692"/>
    </isoform>
</comment>
<comment type="similarity">
    <text evidence="7">Belongs to the ATP-dependent AMP-binding enzyme family.</text>
</comment>
<proteinExistence type="evidence at protein level"/>
<reference key="1">
    <citation type="journal article" date="2004" name="Nat. Genet.">
        <title>Complete sequencing and characterization of 21,243 full-length human cDNAs.</title>
        <authorList>
            <person name="Ota T."/>
            <person name="Suzuki Y."/>
            <person name="Nishikawa T."/>
            <person name="Otsuki T."/>
            <person name="Sugiyama T."/>
            <person name="Irie R."/>
            <person name="Wakamatsu A."/>
            <person name="Hayashi K."/>
            <person name="Sato H."/>
            <person name="Nagai K."/>
            <person name="Kimura K."/>
            <person name="Makita H."/>
            <person name="Sekine M."/>
            <person name="Obayashi M."/>
            <person name="Nishi T."/>
            <person name="Shibahara T."/>
            <person name="Tanaka T."/>
            <person name="Ishii S."/>
            <person name="Yamamoto J."/>
            <person name="Saito K."/>
            <person name="Kawai Y."/>
            <person name="Isono Y."/>
            <person name="Nakamura Y."/>
            <person name="Nagahari K."/>
            <person name="Murakami K."/>
            <person name="Yasuda T."/>
            <person name="Iwayanagi T."/>
            <person name="Wagatsuma M."/>
            <person name="Shiratori A."/>
            <person name="Sudo H."/>
            <person name="Hosoiri T."/>
            <person name="Kaku Y."/>
            <person name="Kodaira H."/>
            <person name="Kondo H."/>
            <person name="Sugawara M."/>
            <person name="Takahashi M."/>
            <person name="Kanda K."/>
            <person name="Yokoi T."/>
            <person name="Furuya T."/>
            <person name="Kikkawa E."/>
            <person name="Omura Y."/>
            <person name="Abe K."/>
            <person name="Kamihara K."/>
            <person name="Katsuta N."/>
            <person name="Sato K."/>
            <person name="Tanikawa M."/>
            <person name="Yamazaki M."/>
            <person name="Ninomiya K."/>
            <person name="Ishibashi T."/>
            <person name="Yamashita H."/>
            <person name="Murakawa K."/>
            <person name="Fujimori K."/>
            <person name="Tanai H."/>
            <person name="Kimata M."/>
            <person name="Watanabe M."/>
            <person name="Hiraoka S."/>
            <person name="Chiba Y."/>
            <person name="Ishida S."/>
            <person name="Ono Y."/>
            <person name="Takiguchi S."/>
            <person name="Watanabe S."/>
            <person name="Yosida M."/>
            <person name="Hotuta T."/>
            <person name="Kusano J."/>
            <person name="Kanehori K."/>
            <person name="Takahashi-Fujii A."/>
            <person name="Hara H."/>
            <person name="Tanase T.-O."/>
            <person name="Nomura Y."/>
            <person name="Togiya S."/>
            <person name="Komai F."/>
            <person name="Hara R."/>
            <person name="Takeuchi K."/>
            <person name="Arita M."/>
            <person name="Imose N."/>
            <person name="Musashino K."/>
            <person name="Yuuki H."/>
            <person name="Oshima A."/>
            <person name="Sasaki N."/>
            <person name="Aotsuka S."/>
            <person name="Yoshikawa Y."/>
            <person name="Matsunawa H."/>
            <person name="Ichihara T."/>
            <person name="Shiohata N."/>
            <person name="Sano S."/>
            <person name="Moriya S."/>
            <person name="Momiyama H."/>
            <person name="Satoh N."/>
            <person name="Takami S."/>
            <person name="Terashima Y."/>
            <person name="Suzuki O."/>
            <person name="Nakagawa S."/>
            <person name="Senoh A."/>
            <person name="Mizoguchi H."/>
            <person name="Goto Y."/>
            <person name="Shimizu F."/>
            <person name="Wakebe H."/>
            <person name="Hishigaki H."/>
            <person name="Watanabe T."/>
            <person name="Sugiyama A."/>
            <person name="Takemoto M."/>
            <person name="Kawakami B."/>
            <person name="Yamazaki M."/>
            <person name="Watanabe K."/>
            <person name="Kumagai A."/>
            <person name="Itakura S."/>
            <person name="Fukuzumi Y."/>
            <person name="Fujimori Y."/>
            <person name="Komiyama M."/>
            <person name="Tashiro H."/>
            <person name="Tanigami A."/>
            <person name="Fujiwara T."/>
            <person name="Ono T."/>
            <person name="Yamada K."/>
            <person name="Fujii Y."/>
            <person name="Ozaki K."/>
            <person name="Hirao M."/>
            <person name="Ohmori Y."/>
            <person name="Kawabata A."/>
            <person name="Hikiji T."/>
            <person name="Kobatake N."/>
            <person name="Inagaki H."/>
            <person name="Ikema Y."/>
            <person name="Okamoto S."/>
            <person name="Okitani R."/>
            <person name="Kawakami T."/>
            <person name="Noguchi S."/>
            <person name="Itoh T."/>
            <person name="Shigeta K."/>
            <person name="Senba T."/>
            <person name="Matsumura K."/>
            <person name="Nakajima Y."/>
            <person name="Mizuno T."/>
            <person name="Morinaga M."/>
            <person name="Sasaki M."/>
            <person name="Togashi T."/>
            <person name="Oyama M."/>
            <person name="Hata H."/>
            <person name="Watanabe M."/>
            <person name="Komatsu T."/>
            <person name="Mizushima-Sugano J."/>
            <person name="Satoh T."/>
            <person name="Shirai Y."/>
            <person name="Takahashi Y."/>
            <person name="Nakagawa K."/>
            <person name="Okumura K."/>
            <person name="Nagase T."/>
            <person name="Nomura N."/>
            <person name="Kikuchi H."/>
            <person name="Masuho Y."/>
            <person name="Yamashita R."/>
            <person name="Nakai K."/>
            <person name="Yada T."/>
            <person name="Nakamura Y."/>
            <person name="Ohara O."/>
            <person name="Isogai T."/>
            <person name="Sugano S."/>
        </authorList>
    </citation>
    <scope>NUCLEOTIDE SEQUENCE [LARGE SCALE MRNA] (ISOFORMS 1 AND 2)</scope>
    <source>
        <tissue>Hepatoma</tissue>
        <tissue>Teratocarcinoma</tissue>
    </source>
</reference>
<reference key="2">
    <citation type="submission" date="2005-07" db="EMBL/GenBank/DDBJ databases">
        <authorList>
            <person name="Mural R.J."/>
            <person name="Istrail S."/>
            <person name="Sutton G.G."/>
            <person name="Florea L."/>
            <person name="Halpern A.L."/>
            <person name="Mobarry C.M."/>
            <person name="Lippert R."/>
            <person name="Walenz B."/>
            <person name="Shatkay H."/>
            <person name="Dew I."/>
            <person name="Miller J.R."/>
            <person name="Flanigan M.J."/>
            <person name="Edwards N.J."/>
            <person name="Bolanos R."/>
            <person name="Fasulo D."/>
            <person name="Halldorsson B.V."/>
            <person name="Hannenhalli S."/>
            <person name="Turner R."/>
            <person name="Yooseph S."/>
            <person name="Lu F."/>
            <person name="Nusskern D.R."/>
            <person name="Shue B.C."/>
            <person name="Zheng X.H."/>
            <person name="Zhong F."/>
            <person name="Delcher A.L."/>
            <person name="Huson D.H."/>
            <person name="Kravitz S.A."/>
            <person name="Mouchard L."/>
            <person name="Reinert K."/>
            <person name="Remington K.A."/>
            <person name="Clark A.G."/>
            <person name="Waterman M.S."/>
            <person name="Eichler E.E."/>
            <person name="Adams M.D."/>
            <person name="Hunkapiller M.W."/>
            <person name="Myers E.W."/>
            <person name="Venter J.C."/>
        </authorList>
    </citation>
    <scope>NUCLEOTIDE SEQUENCE [LARGE SCALE GENOMIC DNA]</scope>
</reference>
<reference key="3">
    <citation type="journal article" date="2004" name="Genome Res.">
        <title>The status, quality, and expansion of the NIH full-length cDNA project: the Mammalian Gene Collection (MGC).</title>
        <authorList>
            <consortium name="The MGC Project Team"/>
        </authorList>
    </citation>
    <scope>NUCLEOTIDE SEQUENCE [LARGE SCALE MRNA] (ISOFORM 1)</scope>
    <source>
        <tissue>Muscle</tissue>
    </source>
</reference>
<reference key="4">
    <citation type="journal article" date="2007" name="J. Lipid Res.">
        <title>Evidence for 26 distinct acyl-coenzyme A synthetase genes in the human genome.</title>
        <authorList>
            <person name="Watkins P.A."/>
            <person name="Maiguel D."/>
            <person name="Jia Z."/>
            <person name="Pevsner J."/>
        </authorList>
    </citation>
    <scope>IDENTIFICATION</scope>
    <scope>NOMENCLATURE</scope>
</reference>
<reference key="5">
    <citation type="journal article" date="2011" name="BMC Syst. Biol.">
        <title>Initial characterization of the human central proteome.</title>
        <authorList>
            <person name="Burkard T.R."/>
            <person name="Planyavsky M."/>
            <person name="Kaupe I."/>
            <person name="Breitwieser F.P."/>
            <person name="Buerckstuemmer T."/>
            <person name="Bennett K.L."/>
            <person name="Superti-Furga G."/>
            <person name="Colinge J."/>
        </authorList>
    </citation>
    <scope>IDENTIFICATION BY MASS SPECTROMETRY [LARGE SCALE ANALYSIS]</scope>
</reference>
<reference key="6">
    <citation type="journal article" date="2014" name="J. Proteomics">
        <title>An enzyme assisted RP-RPLC approach for in-depth analysis of human liver phosphoproteome.</title>
        <authorList>
            <person name="Bian Y."/>
            <person name="Song C."/>
            <person name="Cheng K."/>
            <person name="Dong M."/>
            <person name="Wang F."/>
            <person name="Huang J."/>
            <person name="Sun D."/>
            <person name="Wang L."/>
            <person name="Ye M."/>
            <person name="Zou H."/>
        </authorList>
    </citation>
    <scope>IDENTIFICATION BY MASS SPECTROMETRY [LARGE SCALE ANALYSIS]</scope>
    <source>
        <tissue>Liver</tissue>
    </source>
</reference>
<reference key="7">
    <citation type="journal article" date="2017" name="J. Biochem.">
        <title>Molecular cloning of rat acss3 and characterization of mammalian propionyl-CoA synthetase in the liver mitochondrial matrix.</title>
        <authorList>
            <person name="Yoshimura Y."/>
            <person name="Araki A."/>
            <person name="Maruta H."/>
            <person name="Takahashi Y."/>
            <person name="Yamashita H."/>
        </authorList>
    </citation>
    <scope>FUNCTION</scope>
    <scope>CATALYTIC ACTIVITY</scope>
    <scope>SUBCELLULAR LOCATION</scope>
</reference>
<dbReference type="EC" id="6.2.1.1" evidence="2"/>
<dbReference type="EC" id="6.2.1.17" evidence="5"/>
<dbReference type="EMBL" id="AK025616">
    <property type="protein sequence ID" value="BAB15190.1"/>
    <property type="molecule type" value="mRNA"/>
</dbReference>
<dbReference type="EMBL" id="AK074938">
    <property type="protein sequence ID" value="BAC11304.1"/>
    <property type="molecule type" value="mRNA"/>
</dbReference>
<dbReference type="EMBL" id="CH471054">
    <property type="protein sequence ID" value="EAW97372.1"/>
    <property type="molecule type" value="Genomic_DNA"/>
</dbReference>
<dbReference type="EMBL" id="BC009317">
    <property type="protein sequence ID" value="AAH09317.1"/>
    <property type="molecule type" value="mRNA"/>
</dbReference>
<dbReference type="EMBL" id="BC015769">
    <property type="protein sequence ID" value="AAH15769.1"/>
    <property type="molecule type" value="mRNA"/>
</dbReference>
<dbReference type="CCDS" id="CCDS9022.1">
    <molecule id="Q9H6R3-1"/>
</dbReference>
<dbReference type="RefSeq" id="NP_001317171.1">
    <property type="nucleotide sequence ID" value="NM_001330242.1"/>
</dbReference>
<dbReference type="RefSeq" id="NP_001317172.1">
    <molecule id="Q9H6R3-2"/>
    <property type="nucleotide sequence ID" value="NM_001330243.2"/>
</dbReference>
<dbReference type="RefSeq" id="NP_078836.1">
    <molecule id="Q9H6R3-1"/>
    <property type="nucleotide sequence ID" value="NM_024560.4"/>
</dbReference>
<dbReference type="SMR" id="Q9H6R3"/>
<dbReference type="BioGRID" id="122745">
    <property type="interactions" value="9"/>
</dbReference>
<dbReference type="FunCoup" id="Q9H6R3">
    <property type="interactions" value="962"/>
</dbReference>
<dbReference type="IntAct" id="Q9H6R3">
    <property type="interactions" value="2"/>
</dbReference>
<dbReference type="STRING" id="9606.ENSP00000449535"/>
<dbReference type="GlyGen" id="Q9H6R3">
    <property type="glycosylation" value="1 site, 1 O-linked glycan (1 site)"/>
</dbReference>
<dbReference type="iPTMnet" id="Q9H6R3"/>
<dbReference type="PhosphoSitePlus" id="Q9H6R3"/>
<dbReference type="BioMuta" id="ACSS3"/>
<dbReference type="DMDM" id="74752698"/>
<dbReference type="jPOST" id="Q9H6R3"/>
<dbReference type="MassIVE" id="Q9H6R3"/>
<dbReference type="PaxDb" id="9606-ENSP00000449535"/>
<dbReference type="PeptideAtlas" id="Q9H6R3"/>
<dbReference type="ProteomicsDB" id="81014">
    <molecule id="Q9H6R3-1"/>
</dbReference>
<dbReference type="ProteomicsDB" id="81015">
    <molecule id="Q9H6R3-2"/>
</dbReference>
<dbReference type="Pumba" id="Q9H6R3"/>
<dbReference type="TopDownProteomics" id="Q9H6R3-1">
    <molecule id="Q9H6R3-1"/>
</dbReference>
<dbReference type="Antibodypedia" id="29817">
    <property type="antibodies" value="115 antibodies from 27 providers"/>
</dbReference>
<dbReference type="DNASU" id="79611"/>
<dbReference type="Ensembl" id="ENST00000548058.6">
    <molecule id="Q9H6R3-1"/>
    <property type="protein sequence ID" value="ENSP00000449535.1"/>
    <property type="gene ID" value="ENSG00000111058.8"/>
</dbReference>
<dbReference type="GeneID" id="79611"/>
<dbReference type="KEGG" id="hsa:79611"/>
<dbReference type="MANE-Select" id="ENST00000548058.6">
    <property type="protein sequence ID" value="ENSP00000449535.1"/>
    <property type="RefSeq nucleotide sequence ID" value="NM_024560.4"/>
    <property type="RefSeq protein sequence ID" value="NP_078836.1"/>
</dbReference>
<dbReference type="UCSC" id="uc001szl.2">
    <molecule id="Q9H6R3-1"/>
    <property type="organism name" value="human"/>
</dbReference>
<dbReference type="AGR" id="HGNC:24723"/>
<dbReference type="CTD" id="79611"/>
<dbReference type="DisGeNET" id="79611"/>
<dbReference type="GeneCards" id="ACSS3"/>
<dbReference type="HGNC" id="HGNC:24723">
    <property type="gene designation" value="ACSS3"/>
</dbReference>
<dbReference type="HPA" id="ENSG00000111058">
    <property type="expression patterns" value="Tissue enhanced (liver)"/>
</dbReference>
<dbReference type="MIM" id="614356">
    <property type="type" value="gene"/>
</dbReference>
<dbReference type="neXtProt" id="NX_Q9H6R3"/>
<dbReference type="OpenTargets" id="ENSG00000111058"/>
<dbReference type="PharmGKB" id="PA162375534"/>
<dbReference type="VEuPathDB" id="HostDB:ENSG00000111058"/>
<dbReference type="eggNOG" id="KOG1175">
    <property type="taxonomic scope" value="Eukaryota"/>
</dbReference>
<dbReference type="GeneTree" id="ENSGT00940000157479"/>
<dbReference type="HOGENOM" id="CLU_000022_3_5_1"/>
<dbReference type="InParanoid" id="Q9H6R3"/>
<dbReference type="OMA" id="FIMGRTD"/>
<dbReference type="OrthoDB" id="10253869at2759"/>
<dbReference type="PAN-GO" id="Q9H6R3">
    <property type="GO annotations" value="2 GO annotations based on evolutionary models"/>
</dbReference>
<dbReference type="PhylomeDB" id="Q9H6R3"/>
<dbReference type="TreeFam" id="TF354241"/>
<dbReference type="PathwayCommons" id="Q9H6R3"/>
<dbReference type="Reactome" id="R-HSA-77111">
    <property type="pathway name" value="Synthesis of Ketone Bodies"/>
</dbReference>
<dbReference type="Reactome" id="R-HSA-9841922">
    <property type="pathway name" value="MLL4 and MLL3 complexes regulate expression of PPARG target genes in adipogenesis and hepatic steatosis"/>
</dbReference>
<dbReference type="SignaLink" id="Q9H6R3"/>
<dbReference type="SIGNOR" id="Q9H6R3"/>
<dbReference type="BioGRID-ORCS" id="79611">
    <property type="hits" value="12 hits in 1153 CRISPR screens"/>
</dbReference>
<dbReference type="ChiTaRS" id="ACSS3">
    <property type="organism name" value="human"/>
</dbReference>
<dbReference type="GenomeRNAi" id="79611"/>
<dbReference type="Pharos" id="Q9H6R3">
    <property type="development level" value="Tbio"/>
</dbReference>
<dbReference type="PRO" id="PR:Q9H6R3"/>
<dbReference type="Proteomes" id="UP000005640">
    <property type="component" value="Chromosome 12"/>
</dbReference>
<dbReference type="RNAct" id="Q9H6R3">
    <property type="molecule type" value="protein"/>
</dbReference>
<dbReference type="Bgee" id="ENSG00000111058">
    <property type="expression patterns" value="Expressed in germinal epithelium of ovary and 153 other cell types or tissues"/>
</dbReference>
<dbReference type="ExpressionAtlas" id="Q9H6R3">
    <property type="expression patterns" value="baseline and differential"/>
</dbReference>
<dbReference type="GO" id="GO:0043231">
    <property type="term" value="C:intracellular membrane-bounded organelle"/>
    <property type="evidence" value="ECO:0000314"/>
    <property type="project" value="HPA"/>
</dbReference>
<dbReference type="GO" id="GO:0005759">
    <property type="term" value="C:mitochondrial matrix"/>
    <property type="evidence" value="ECO:0000314"/>
    <property type="project" value="UniProtKB"/>
</dbReference>
<dbReference type="GO" id="GO:0005739">
    <property type="term" value="C:mitochondrion"/>
    <property type="evidence" value="ECO:0000314"/>
    <property type="project" value="HPA"/>
</dbReference>
<dbReference type="GO" id="GO:0003987">
    <property type="term" value="F:acetate-CoA ligase activity"/>
    <property type="evidence" value="ECO:0000250"/>
    <property type="project" value="UniProtKB"/>
</dbReference>
<dbReference type="GO" id="GO:0005524">
    <property type="term" value="F:ATP binding"/>
    <property type="evidence" value="ECO:0007669"/>
    <property type="project" value="UniProtKB-KW"/>
</dbReference>
<dbReference type="GO" id="GO:0031956">
    <property type="term" value="F:medium-chain fatty acid-CoA ligase activity"/>
    <property type="evidence" value="ECO:0000250"/>
    <property type="project" value="UniProtKB"/>
</dbReference>
<dbReference type="GO" id="GO:0050218">
    <property type="term" value="F:propionate-CoA ligase activity"/>
    <property type="evidence" value="ECO:0000314"/>
    <property type="project" value="UniProtKB"/>
</dbReference>
<dbReference type="GO" id="GO:0046951">
    <property type="term" value="P:ketone body biosynthetic process"/>
    <property type="evidence" value="ECO:0000304"/>
    <property type="project" value="Reactome"/>
</dbReference>
<dbReference type="CDD" id="cd05967">
    <property type="entry name" value="PrpE"/>
    <property type="match status" value="1"/>
</dbReference>
<dbReference type="FunFam" id="3.40.50.12780:FF:000011">
    <property type="entry name" value="Acetyl-coenzyme A synthetase 2-like, mitochondrial"/>
    <property type="match status" value="1"/>
</dbReference>
<dbReference type="FunFam" id="3.30.300.30:FF:000017">
    <property type="entry name" value="Acyl-CoA synthetase short-chain family member 3"/>
    <property type="match status" value="1"/>
</dbReference>
<dbReference type="Gene3D" id="3.30.300.30">
    <property type="match status" value="1"/>
</dbReference>
<dbReference type="Gene3D" id="3.40.50.12780">
    <property type="entry name" value="N-terminal domain of ligase-like"/>
    <property type="match status" value="1"/>
</dbReference>
<dbReference type="InterPro" id="IPR032387">
    <property type="entry name" value="ACAS_N"/>
</dbReference>
<dbReference type="InterPro" id="IPR025110">
    <property type="entry name" value="AMP-bd_C"/>
</dbReference>
<dbReference type="InterPro" id="IPR045851">
    <property type="entry name" value="AMP-bd_C_sf"/>
</dbReference>
<dbReference type="InterPro" id="IPR020845">
    <property type="entry name" value="AMP-binding_CS"/>
</dbReference>
<dbReference type="InterPro" id="IPR000873">
    <property type="entry name" value="AMP-dep_synth/lig_dom"/>
</dbReference>
<dbReference type="InterPro" id="IPR042099">
    <property type="entry name" value="ANL_N_sf"/>
</dbReference>
<dbReference type="PANTHER" id="PTHR43347">
    <property type="entry name" value="ACYL-COA SYNTHETASE"/>
    <property type="match status" value="1"/>
</dbReference>
<dbReference type="PANTHER" id="PTHR43347:SF3">
    <property type="entry name" value="ACYL-COA SYNTHETASE SHORT-CHAIN FAMILY MEMBER 3, MITOCHONDRIAL"/>
    <property type="match status" value="1"/>
</dbReference>
<dbReference type="Pfam" id="PF16177">
    <property type="entry name" value="ACAS_N"/>
    <property type="match status" value="1"/>
</dbReference>
<dbReference type="Pfam" id="PF00501">
    <property type="entry name" value="AMP-binding"/>
    <property type="match status" value="1"/>
</dbReference>
<dbReference type="Pfam" id="PF13193">
    <property type="entry name" value="AMP-binding_C"/>
    <property type="match status" value="1"/>
</dbReference>
<dbReference type="SUPFAM" id="SSF56801">
    <property type="entry name" value="Acetyl-CoA synthetase-like"/>
    <property type="match status" value="1"/>
</dbReference>
<dbReference type="PROSITE" id="PS00455">
    <property type="entry name" value="AMP_BINDING"/>
    <property type="match status" value="1"/>
</dbReference>
<name>ACSS3_HUMAN</name>
<feature type="transit peptide" description="Mitochondrion" evidence="4">
    <location>
        <begin position="1"/>
        <end position="29"/>
    </location>
</feature>
<feature type="chain" id="PRO_0000320624" description="Acyl-CoA synthetase short-chain family member 3, mitochondrial">
    <location>
        <begin position="30"/>
        <end position="686"/>
    </location>
</feature>
<feature type="binding site" evidence="1">
    <location>
        <begin position="227"/>
        <end position="230"/>
    </location>
    <ligand>
        <name>CoA</name>
        <dbReference type="ChEBI" id="CHEBI:57287"/>
    </ligand>
</feature>
<feature type="binding site" evidence="1">
    <location>
        <begin position="425"/>
        <end position="427"/>
    </location>
    <ligand>
        <name>ATP</name>
        <dbReference type="ChEBI" id="CHEBI:30616"/>
    </ligand>
</feature>
<feature type="binding site" evidence="1">
    <location>
        <begin position="446"/>
        <end position="451"/>
    </location>
    <ligand>
        <name>ATP</name>
        <dbReference type="ChEBI" id="CHEBI:30616"/>
    </ligand>
</feature>
<feature type="binding site" evidence="1">
    <location>
        <position position="539"/>
    </location>
    <ligand>
        <name>ATP</name>
        <dbReference type="ChEBI" id="CHEBI:30616"/>
    </ligand>
</feature>
<feature type="binding site" evidence="1">
    <location>
        <position position="554"/>
    </location>
    <ligand>
        <name>ATP</name>
        <dbReference type="ChEBI" id="CHEBI:30616"/>
    </ligand>
</feature>
<feature type="binding site" evidence="1">
    <location>
        <position position="565"/>
    </location>
    <ligand>
        <name>ATP</name>
        <dbReference type="ChEBI" id="CHEBI:30616"/>
    </ligand>
</feature>
<feature type="binding site" evidence="1">
    <location>
        <position position="624"/>
    </location>
    <ligand>
        <name>CoA</name>
        <dbReference type="ChEBI" id="CHEBI:57287"/>
    </ligand>
</feature>
<feature type="modified residue" description="N6-succinyllysine" evidence="3">
    <location>
        <position position="518"/>
    </location>
</feature>
<feature type="modified residue" description="N6-acetyllysine" evidence="3">
    <location>
        <position position="524"/>
    </location>
</feature>
<feature type="splice variant" id="VSP_031692" description="In isoform 2." evidence="6">
    <location>
        <begin position="1"/>
        <end position="318"/>
    </location>
</feature>
<feature type="sequence conflict" description="In Ref. 1; BAC11304." evidence="7" ref="1">
    <original>C</original>
    <variation>S</variation>
    <location>
        <position position="428"/>
    </location>
</feature>
<accession>Q9H6R3</accession>
<accession>Q8NC66</accession>
<keyword id="KW-0007">Acetylation</keyword>
<keyword id="KW-0025">Alternative splicing</keyword>
<keyword id="KW-0067">ATP-binding</keyword>
<keyword id="KW-0436">Ligase</keyword>
<keyword id="KW-0443">Lipid metabolism</keyword>
<keyword id="KW-0496">Mitochondrion</keyword>
<keyword id="KW-0547">Nucleotide-binding</keyword>
<keyword id="KW-1267">Proteomics identification</keyword>
<keyword id="KW-1185">Reference proteome</keyword>
<keyword id="KW-0809">Transit peptide</keyword>
<protein>
    <recommendedName>
        <fullName>Acyl-CoA synthetase short-chain family member 3, mitochondrial</fullName>
        <ecNumber evidence="2">6.2.1.1</ecNumber>
    </recommendedName>
    <alternativeName>
        <fullName>Acetate--CoA ligase 3</fullName>
    </alternativeName>
    <alternativeName>
        <fullName>Acyl-CoA synthetase short-chain family member 3</fullName>
    </alternativeName>
    <alternativeName>
        <fullName>Propionate--CoA ligase</fullName>
        <ecNumber evidence="5">6.2.1.17</ecNumber>
    </alternativeName>
</protein>
<evidence type="ECO:0000250" key="1"/>
<evidence type="ECO:0000250" key="2">
    <source>
        <dbReference type="UniProtKB" id="A0A0G2K047"/>
    </source>
</evidence>
<evidence type="ECO:0000250" key="3">
    <source>
        <dbReference type="UniProtKB" id="Q14DH7"/>
    </source>
</evidence>
<evidence type="ECO:0000255" key="4"/>
<evidence type="ECO:0000269" key="5">
    <source>
    </source>
</evidence>
<evidence type="ECO:0000303" key="6">
    <source>
    </source>
</evidence>
<evidence type="ECO:0000305" key="7"/>
<evidence type="ECO:0000305" key="8">
    <source>
    </source>
</evidence>